<comment type="function">
    <text evidence="2 3 4">Transcription factor. Plays a crucial role in cell survival and RAD51 foci formation in response to methylating DNA damage. Involved in regulating the activity of ATM in the absence of DNA damage. May play a role in stabilizing ATM. Binds to the DYNLL1 promoter and activates its transcription.</text>
</comment>
<comment type="subunit">
    <text evidence="3 4">Interacts via its C-terminus with ATM. Interacts with DYNLL1; this interaction inhibits ATMIN transcriptional activity and hence may play a role in a feedback loop whereby DYNLL1 inhibits transactivation of its own promoter by ATMIN.</text>
</comment>
<comment type="interaction">
    <interactant intactId="EBI-7422202">
        <id>O43313</id>
    </interactant>
    <interactant intactId="EBI-495465">
        <id>Q13315</id>
        <label>ATM</label>
    </interactant>
    <organismsDiffer>false</organismsDiffer>
    <experiments>5</experiments>
</comment>
<comment type="subcellular location">
    <subcellularLocation>
        <location evidence="2 3">Nucleus</location>
    </subcellularLocation>
    <text>Nuclear, in discrete foci during G1 phase.</text>
</comment>
<comment type="alternative products">
    <event type="alternative splicing"/>
    <isoform>
        <id>O43313-1</id>
        <name>1</name>
        <sequence type="displayed"/>
    </isoform>
    <isoform>
        <id>O43313-2</id>
        <name>2</name>
        <sequence type="described" ref="VSP_035820"/>
    </isoform>
</comment>
<comment type="tissue specificity">
    <text evidence="2">Ubiquitously expressed in normal tissues and cancer cell lines with highest levels in placenta and skeletal muscle.</text>
</comment>
<comment type="sequence caution" evidence="7">
    <conflict type="erroneous initiation">
        <sequence resource="EMBL-CDS" id="BAA24861"/>
    </conflict>
    <text>Extended N-terminus.</text>
</comment>
<comment type="sequence caution" evidence="7">
    <conflict type="erroneous initiation">
        <sequence resource="EMBL-CDS" id="BAF83632"/>
    </conflict>
    <text>Truncated N-terminus.</text>
</comment>
<evidence type="ECO:0000256" key="1">
    <source>
        <dbReference type="SAM" id="MobiDB-lite"/>
    </source>
</evidence>
<evidence type="ECO:0000269" key="2">
    <source>
    </source>
</evidence>
<evidence type="ECO:0000269" key="3">
    <source>
    </source>
</evidence>
<evidence type="ECO:0000269" key="4">
    <source>
    </source>
</evidence>
<evidence type="ECO:0000303" key="5">
    <source>
    </source>
</evidence>
<evidence type="ECO:0000303" key="6">
    <source>
    </source>
</evidence>
<evidence type="ECO:0000305" key="7"/>
<name>ATMIN_HUMAN</name>
<reference key="1">
    <citation type="journal article" date="1997" name="DNA Res.">
        <title>Prediction of the coding sequences of unidentified human genes. VIII. 78 new cDNA clones from brain which code for large proteins in vitro.</title>
        <authorList>
            <person name="Ishikawa K."/>
            <person name="Nagase T."/>
            <person name="Nakajima D."/>
            <person name="Seki N."/>
            <person name="Ohira M."/>
            <person name="Miyajima N."/>
            <person name="Tanaka A."/>
            <person name="Kotani H."/>
            <person name="Nomura N."/>
            <person name="Ohara O."/>
        </authorList>
    </citation>
    <scope>NUCLEOTIDE SEQUENCE [LARGE SCALE MRNA] (ISOFORM 2)</scope>
    <source>
        <tissue>Brain</tissue>
    </source>
</reference>
<reference key="2">
    <citation type="journal article" date="2007" name="BMC Genomics">
        <title>The full-ORF clone resource of the German cDNA consortium.</title>
        <authorList>
            <person name="Bechtel S."/>
            <person name="Rosenfelder H."/>
            <person name="Duda A."/>
            <person name="Schmidt C.P."/>
            <person name="Ernst U."/>
            <person name="Wellenreuther R."/>
            <person name="Mehrle A."/>
            <person name="Schuster C."/>
            <person name="Bahr A."/>
            <person name="Bloecker H."/>
            <person name="Heubner D."/>
            <person name="Hoerlein A."/>
            <person name="Michel G."/>
            <person name="Wedler H."/>
            <person name="Koehrer K."/>
            <person name="Ottenwaelder B."/>
            <person name="Poustka A."/>
            <person name="Wiemann S."/>
            <person name="Schupp I."/>
        </authorList>
    </citation>
    <scope>NUCLEOTIDE SEQUENCE [LARGE SCALE MRNA] (ISOFORM 2)</scope>
    <source>
        <tissue>Liver</tissue>
    </source>
</reference>
<reference key="3">
    <citation type="journal article" date="2004" name="Nature">
        <title>The sequence and analysis of duplication-rich human chromosome 16.</title>
        <authorList>
            <person name="Martin J."/>
            <person name="Han C."/>
            <person name="Gordon L.A."/>
            <person name="Terry A."/>
            <person name="Prabhakar S."/>
            <person name="She X."/>
            <person name="Xie G."/>
            <person name="Hellsten U."/>
            <person name="Chan Y.M."/>
            <person name="Altherr M."/>
            <person name="Couronne O."/>
            <person name="Aerts A."/>
            <person name="Bajorek E."/>
            <person name="Black S."/>
            <person name="Blumer H."/>
            <person name="Branscomb E."/>
            <person name="Brown N.C."/>
            <person name="Bruno W.J."/>
            <person name="Buckingham J.M."/>
            <person name="Callen D.F."/>
            <person name="Campbell C.S."/>
            <person name="Campbell M.L."/>
            <person name="Campbell E.W."/>
            <person name="Caoile C."/>
            <person name="Challacombe J.F."/>
            <person name="Chasteen L.A."/>
            <person name="Chertkov O."/>
            <person name="Chi H.C."/>
            <person name="Christensen M."/>
            <person name="Clark L.M."/>
            <person name="Cohn J.D."/>
            <person name="Denys M."/>
            <person name="Detter J.C."/>
            <person name="Dickson M."/>
            <person name="Dimitrijevic-Bussod M."/>
            <person name="Escobar J."/>
            <person name="Fawcett J.J."/>
            <person name="Flowers D."/>
            <person name="Fotopulos D."/>
            <person name="Glavina T."/>
            <person name="Gomez M."/>
            <person name="Gonzales E."/>
            <person name="Goodstein D."/>
            <person name="Goodwin L.A."/>
            <person name="Grady D.L."/>
            <person name="Grigoriev I."/>
            <person name="Groza M."/>
            <person name="Hammon N."/>
            <person name="Hawkins T."/>
            <person name="Haydu L."/>
            <person name="Hildebrand C.E."/>
            <person name="Huang W."/>
            <person name="Israni S."/>
            <person name="Jett J."/>
            <person name="Jewett P.B."/>
            <person name="Kadner K."/>
            <person name="Kimball H."/>
            <person name="Kobayashi A."/>
            <person name="Krawczyk M.-C."/>
            <person name="Leyba T."/>
            <person name="Longmire J.L."/>
            <person name="Lopez F."/>
            <person name="Lou Y."/>
            <person name="Lowry S."/>
            <person name="Ludeman T."/>
            <person name="Manohar C.F."/>
            <person name="Mark G.A."/>
            <person name="McMurray K.L."/>
            <person name="Meincke L.J."/>
            <person name="Morgan J."/>
            <person name="Moyzis R.K."/>
            <person name="Mundt M.O."/>
            <person name="Munk A.C."/>
            <person name="Nandkeshwar R.D."/>
            <person name="Pitluck S."/>
            <person name="Pollard M."/>
            <person name="Predki P."/>
            <person name="Parson-Quintana B."/>
            <person name="Ramirez L."/>
            <person name="Rash S."/>
            <person name="Retterer J."/>
            <person name="Ricke D.O."/>
            <person name="Robinson D.L."/>
            <person name="Rodriguez A."/>
            <person name="Salamov A."/>
            <person name="Saunders E.H."/>
            <person name="Scott D."/>
            <person name="Shough T."/>
            <person name="Stallings R.L."/>
            <person name="Stalvey M."/>
            <person name="Sutherland R.D."/>
            <person name="Tapia R."/>
            <person name="Tesmer J.G."/>
            <person name="Thayer N."/>
            <person name="Thompson L.S."/>
            <person name="Tice H."/>
            <person name="Torney D.C."/>
            <person name="Tran-Gyamfi M."/>
            <person name="Tsai M."/>
            <person name="Ulanovsky L.E."/>
            <person name="Ustaszewska A."/>
            <person name="Vo N."/>
            <person name="White P.S."/>
            <person name="Williams A.L."/>
            <person name="Wills P.L."/>
            <person name="Wu J.-R."/>
            <person name="Wu K."/>
            <person name="Yang J."/>
            <person name="DeJong P."/>
            <person name="Bruce D."/>
            <person name="Doggett N.A."/>
            <person name="Deaven L."/>
            <person name="Schmutz J."/>
            <person name="Grimwood J."/>
            <person name="Richardson P."/>
            <person name="Rokhsar D.S."/>
            <person name="Eichler E.E."/>
            <person name="Gilna P."/>
            <person name="Lucas S.M."/>
            <person name="Myers R.M."/>
            <person name="Rubin E.M."/>
            <person name="Pennacchio L.A."/>
        </authorList>
    </citation>
    <scope>NUCLEOTIDE SEQUENCE [LARGE SCALE GENOMIC DNA]</scope>
</reference>
<reference key="4">
    <citation type="journal article" date="2004" name="Genome Res.">
        <title>The status, quality, and expansion of the NIH full-length cDNA project: the Mammalian Gene Collection (MGC).</title>
        <authorList>
            <consortium name="The MGC Project Team"/>
        </authorList>
    </citation>
    <scope>NUCLEOTIDE SEQUENCE [LARGE SCALE MRNA] OF 56-823 (ISOFORM 1)</scope>
    <source>
        <tissue>Uterus</tissue>
    </source>
</reference>
<reference key="5">
    <citation type="journal article" date="2004" name="Nat. Genet.">
        <title>Complete sequencing and characterization of 21,243 full-length human cDNAs.</title>
        <authorList>
            <person name="Ota T."/>
            <person name="Suzuki Y."/>
            <person name="Nishikawa T."/>
            <person name="Otsuki T."/>
            <person name="Sugiyama T."/>
            <person name="Irie R."/>
            <person name="Wakamatsu A."/>
            <person name="Hayashi K."/>
            <person name="Sato H."/>
            <person name="Nagai K."/>
            <person name="Kimura K."/>
            <person name="Makita H."/>
            <person name="Sekine M."/>
            <person name="Obayashi M."/>
            <person name="Nishi T."/>
            <person name="Shibahara T."/>
            <person name="Tanaka T."/>
            <person name="Ishii S."/>
            <person name="Yamamoto J."/>
            <person name="Saito K."/>
            <person name="Kawai Y."/>
            <person name="Isono Y."/>
            <person name="Nakamura Y."/>
            <person name="Nagahari K."/>
            <person name="Murakami K."/>
            <person name="Yasuda T."/>
            <person name="Iwayanagi T."/>
            <person name="Wagatsuma M."/>
            <person name="Shiratori A."/>
            <person name="Sudo H."/>
            <person name="Hosoiri T."/>
            <person name="Kaku Y."/>
            <person name="Kodaira H."/>
            <person name="Kondo H."/>
            <person name="Sugawara M."/>
            <person name="Takahashi M."/>
            <person name="Kanda K."/>
            <person name="Yokoi T."/>
            <person name="Furuya T."/>
            <person name="Kikkawa E."/>
            <person name="Omura Y."/>
            <person name="Abe K."/>
            <person name="Kamihara K."/>
            <person name="Katsuta N."/>
            <person name="Sato K."/>
            <person name="Tanikawa M."/>
            <person name="Yamazaki M."/>
            <person name="Ninomiya K."/>
            <person name="Ishibashi T."/>
            <person name="Yamashita H."/>
            <person name="Murakawa K."/>
            <person name="Fujimori K."/>
            <person name="Tanai H."/>
            <person name="Kimata M."/>
            <person name="Watanabe M."/>
            <person name="Hiraoka S."/>
            <person name="Chiba Y."/>
            <person name="Ishida S."/>
            <person name="Ono Y."/>
            <person name="Takiguchi S."/>
            <person name="Watanabe S."/>
            <person name="Yosida M."/>
            <person name="Hotuta T."/>
            <person name="Kusano J."/>
            <person name="Kanehori K."/>
            <person name="Takahashi-Fujii A."/>
            <person name="Hara H."/>
            <person name="Tanase T.-O."/>
            <person name="Nomura Y."/>
            <person name="Togiya S."/>
            <person name="Komai F."/>
            <person name="Hara R."/>
            <person name="Takeuchi K."/>
            <person name="Arita M."/>
            <person name="Imose N."/>
            <person name="Musashino K."/>
            <person name="Yuuki H."/>
            <person name="Oshima A."/>
            <person name="Sasaki N."/>
            <person name="Aotsuka S."/>
            <person name="Yoshikawa Y."/>
            <person name="Matsunawa H."/>
            <person name="Ichihara T."/>
            <person name="Shiohata N."/>
            <person name="Sano S."/>
            <person name="Moriya S."/>
            <person name="Momiyama H."/>
            <person name="Satoh N."/>
            <person name="Takami S."/>
            <person name="Terashima Y."/>
            <person name="Suzuki O."/>
            <person name="Nakagawa S."/>
            <person name="Senoh A."/>
            <person name="Mizoguchi H."/>
            <person name="Goto Y."/>
            <person name="Shimizu F."/>
            <person name="Wakebe H."/>
            <person name="Hishigaki H."/>
            <person name="Watanabe T."/>
            <person name="Sugiyama A."/>
            <person name="Takemoto M."/>
            <person name="Kawakami B."/>
            <person name="Yamazaki M."/>
            <person name="Watanabe K."/>
            <person name="Kumagai A."/>
            <person name="Itakura S."/>
            <person name="Fukuzumi Y."/>
            <person name="Fujimori Y."/>
            <person name="Komiyama M."/>
            <person name="Tashiro H."/>
            <person name="Tanigami A."/>
            <person name="Fujiwara T."/>
            <person name="Ono T."/>
            <person name="Yamada K."/>
            <person name="Fujii Y."/>
            <person name="Ozaki K."/>
            <person name="Hirao M."/>
            <person name="Ohmori Y."/>
            <person name="Kawabata A."/>
            <person name="Hikiji T."/>
            <person name="Kobatake N."/>
            <person name="Inagaki H."/>
            <person name="Ikema Y."/>
            <person name="Okamoto S."/>
            <person name="Okitani R."/>
            <person name="Kawakami T."/>
            <person name="Noguchi S."/>
            <person name="Itoh T."/>
            <person name="Shigeta K."/>
            <person name="Senba T."/>
            <person name="Matsumura K."/>
            <person name="Nakajima Y."/>
            <person name="Mizuno T."/>
            <person name="Morinaga M."/>
            <person name="Sasaki M."/>
            <person name="Togashi T."/>
            <person name="Oyama M."/>
            <person name="Hata H."/>
            <person name="Watanabe M."/>
            <person name="Komatsu T."/>
            <person name="Mizushima-Sugano J."/>
            <person name="Satoh T."/>
            <person name="Shirai Y."/>
            <person name="Takahashi Y."/>
            <person name="Nakagawa K."/>
            <person name="Okumura K."/>
            <person name="Nagase T."/>
            <person name="Nomura N."/>
            <person name="Kikuchi H."/>
            <person name="Masuho Y."/>
            <person name="Yamashita R."/>
            <person name="Nakai K."/>
            <person name="Yada T."/>
            <person name="Nakamura Y."/>
            <person name="Ohara O."/>
            <person name="Isogai T."/>
            <person name="Sugano S."/>
        </authorList>
    </citation>
    <scope>NUCLEOTIDE SEQUENCE [LARGE SCALE MRNA] OF 67-823 (ISOFORM 1)</scope>
    <source>
        <tissue>Teratocarcinoma</tissue>
    </source>
</reference>
<reference key="6">
    <citation type="journal article" date="2005" name="EMBO J.">
        <title>ASCIZ regulates lesion-specific Rad51 focus formation and apoptosis after methylating DNA damage.</title>
        <authorList>
            <person name="McNees C.J."/>
            <person name="Conlan L.A."/>
            <person name="Tenis N."/>
            <person name="Heierhorst J."/>
        </authorList>
    </citation>
    <scope>FUNCTION</scope>
    <scope>SUBCELLULAR LOCATION</scope>
    <scope>TISSUE SPECIFICITY</scope>
    <scope>REGION</scope>
</reference>
<reference key="7">
    <citation type="journal article" date="2007" name="EMBO J.">
        <title>ATMIN defines an NBS1-independent pathway of ATM signalling.</title>
        <authorList>
            <person name="Kanu N."/>
            <person name="Behrens A."/>
        </authorList>
    </citation>
    <scope>FUNCTION</scope>
    <scope>INTERACTION WITH ATM</scope>
    <scope>SUBCELLULAR LOCATION</scope>
</reference>
<reference key="8">
    <citation type="journal article" date="2012" name="J. Biol. Chem.">
        <title>ATM substrate Chk2-interacting Zn2+ finger (ASCIZ) Is a bi-functional transcriptional activator and feedback sensor in the regulation of dynein light chain (DYNLL1) expression.</title>
        <authorList>
            <person name="Jurado S."/>
            <person name="Conlan L.A."/>
            <person name="Baker E.K."/>
            <person name="Ng J.L."/>
            <person name="Tenis N."/>
            <person name="Hoch N.C."/>
            <person name="Gleeson K."/>
            <person name="Smeets M."/>
            <person name="Izon D."/>
            <person name="Heierhorst J."/>
        </authorList>
    </citation>
    <scope>FUNCTION</scope>
    <scope>INTERACTION WITH DYNLL1</scope>
</reference>
<dbReference type="EMBL" id="AB007891">
    <property type="protein sequence ID" value="BAA24861.2"/>
    <property type="status" value="ALT_INIT"/>
    <property type="molecule type" value="mRNA"/>
</dbReference>
<dbReference type="EMBL" id="CR749457">
    <property type="protein sequence ID" value="CAH18291.1"/>
    <property type="molecule type" value="mRNA"/>
</dbReference>
<dbReference type="EMBL" id="AC092718">
    <property type="status" value="NOT_ANNOTATED_CDS"/>
    <property type="molecule type" value="Genomic_DNA"/>
</dbReference>
<dbReference type="EMBL" id="BC002701">
    <property type="protein sequence ID" value="AAH02701.2"/>
    <property type="molecule type" value="mRNA"/>
</dbReference>
<dbReference type="EMBL" id="AK290943">
    <property type="protein sequence ID" value="BAF83632.1"/>
    <property type="status" value="ALT_INIT"/>
    <property type="molecule type" value="mRNA"/>
</dbReference>
<dbReference type="CCDS" id="CCDS32494.1">
    <molecule id="O43313-1"/>
</dbReference>
<dbReference type="CCDS" id="CCDS73917.1">
    <molecule id="O43313-2"/>
</dbReference>
<dbReference type="PIR" id="T00061">
    <property type="entry name" value="T00061"/>
</dbReference>
<dbReference type="RefSeq" id="NP_001287657.1">
    <molecule id="O43313-2"/>
    <property type="nucleotide sequence ID" value="NM_001300728.2"/>
</dbReference>
<dbReference type="RefSeq" id="NP_056066.2">
    <molecule id="O43313-1"/>
    <property type="nucleotide sequence ID" value="NM_015251.2"/>
</dbReference>
<dbReference type="BioGRID" id="116892">
    <property type="interactions" value="13"/>
</dbReference>
<dbReference type="FunCoup" id="O43313">
    <property type="interactions" value="3100"/>
</dbReference>
<dbReference type="IntAct" id="O43313">
    <property type="interactions" value="7"/>
</dbReference>
<dbReference type="MINT" id="O43313"/>
<dbReference type="STRING" id="9606.ENSP00000299575"/>
<dbReference type="iPTMnet" id="O43313"/>
<dbReference type="PhosphoSitePlus" id="O43313"/>
<dbReference type="BioMuta" id="ATMIN"/>
<dbReference type="jPOST" id="O43313"/>
<dbReference type="MassIVE" id="O43313"/>
<dbReference type="PaxDb" id="9606-ENSP00000299575"/>
<dbReference type="PeptideAtlas" id="O43313"/>
<dbReference type="ProteomicsDB" id="48890">
    <molecule id="O43313-1"/>
</dbReference>
<dbReference type="ProteomicsDB" id="48891">
    <molecule id="O43313-2"/>
</dbReference>
<dbReference type="Antibodypedia" id="30434">
    <property type="antibodies" value="140 antibodies from 25 providers"/>
</dbReference>
<dbReference type="DNASU" id="23300"/>
<dbReference type="Ensembl" id="ENST00000299575.5">
    <molecule id="O43313-1"/>
    <property type="protein sequence ID" value="ENSP00000299575.3"/>
    <property type="gene ID" value="ENSG00000166454.10"/>
</dbReference>
<dbReference type="Ensembl" id="ENST00000564241.5">
    <molecule id="O43313-2"/>
    <property type="protein sequence ID" value="ENSP00000463478.1"/>
    <property type="gene ID" value="ENSG00000166454.10"/>
</dbReference>
<dbReference type="Ensembl" id="ENST00000566488.1">
    <molecule id="O43313-2"/>
    <property type="protein sequence ID" value="ENSP00000455497.1"/>
    <property type="gene ID" value="ENSG00000166454.10"/>
</dbReference>
<dbReference type="Ensembl" id="ENST00000709336.1">
    <molecule id="O43313-1"/>
    <property type="protein sequence ID" value="ENSP00000517627.1"/>
    <property type="gene ID" value="ENSG00000291953.1"/>
</dbReference>
<dbReference type="Ensembl" id="ENST00000709339.1">
    <molecule id="O43313-2"/>
    <property type="protein sequence ID" value="ENSP00000517628.1"/>
    <property type="gene ID" value="ENSG00000291953.1"/>
</dbReference>
<dbReference type="Ensembl" id="ENST00000709341.1">
    <molecule id="O43313-2"/>
    <property type="protein sequence ID" value="ENSP00000517630.1"/>
    <property type="gene ID" value="ENSG00000291953.1"/>
</dbReference>
<dbReference type="GeneID" id="23300"/>
<dbReference type="KEGG" id="hsa:23300"/>
<dbReference type="MANE-Select" id="ENST00000299575.5">
    <property type="protein sequence ID" value="ENSP00000299575.3"/>
    <property type="RefSeq nucleotide sequence ID" value="NM_015251.3"/>
    <property type="RefSeq protein sequence ID" value="NP_056066.2"/>
</dbReference>
<dbReference type="UCSC" id="uc002ffz.2">
    <molecule id="O43313-1"/>
    <property type="organism name" value="human"/>
</dbReference>
<dbReference type="AGR" id="HGNC:29034"/>
<dbReference type="CTD" id="23300"/>
<dbReference type="DisGeNET" id="23300"/>
<dbReference type="GeneCards" id="ATMIN"/>
<dbReference type="HGNC" id="HGNC:29034">
    <property type="gene designation" value="ATMIN"/>
</dbReference>
<dbReference type="HPA" id="ENSG00000166454">
    <property type="expression patterns" value="Low tissue specificity"/>
</dbReference>
<dbReference type="MIM" id="614693">
    <property type="type" value="gene"/>
</dbReference>
<dbReference type="neXtProt" id="NX_O43313"/>
<dbReference type="OpenTargets" id="ENSG00000166454"/>
<dbReference type="PharmGKB" id="PA162377191"/>
<dbReference type="VEuPathDB" id="HostDB:ENSG00000166454"/>
<dbReference type="eggNOG" id="KOG1721">
    <property type="taxonomic scope" value="Eukaryota"/>
</dbReference>
<dbReference type="GeneTree" id="ENSGT00390000013091"/>
<dbReference type="HOGENOM" id="CLU_023902_0_0_1"/>
<dbReference type="InParanoid" id="O43313"/>
<dbReference type="OMA" id="LCALFQH"/>
<dbReference type="OrthoDB" id="6354171at2759"/>
<dbReference type="PAN-GO" id="O43313">
    <property type="GO annotations" value="4 GO annotations based on evolutionary models"/>
</dbReference>
<dbReference type="PhylomeDB" id="O43313"/>
<dbReference type="TreeFam" id="TF331171"/>
<dbReference type="PathwayCommons" id="O43313"/>
<dbReference type="SignaLink" id="O43313"/>
<dbReference type="BioGRID-ORCS" id="23300">
    <property type="hits" value="141 hits in 1168 CRISPR screens"/>
</dbReference>
<dbReference type="CD-CODE" id="A0DCDA94">
    <property type="entry name" value="DNA damage foci"/>
</dbReference>
<dbReference type="ChiTaRS" id="ATMIN">
    <property type="organism name" value="human"/>
</dbReference>
<dbReference type="GenomeRNAi" id="23300"/>
<dbReference type="Pharos" id="O43313">
    <property type="development level" value="Tbio"/>
</dbReference>
<dbReference type="PRO" id="PR:O43313"/>
<dbReference type="Proteomes" id="UP000005640">
    <property type="component" value="Chromosome 16"/>
</dbReference>
<dbReference type="RNAct" id="O43313">
    <property type="molecule type" value="protein"/>
</dbReference>
<dbReference type="Bgee" id="ENSG00000166454">
    <property type="expression patterns" value="Expressed in sperm and 209 other cell types or tissues"/>
</dbReference>
<dbReference type="ExpressionAtlas" id="O43313">
    <property type="expression patterns" value="baseline and differential"/>
</dbReference>
<dbReference type="GO" id="GO:0016604">
    <property type="term" value="C:nuclear body"/>
    <property type="evidence" value="ECO:0000314"/>
    <property type="project" value="HPA"/>
</dbReference>
<dbReference type="GO" id="GO:0005634">
    <property type="term" value="C:nucleus"/>
    <property type="evidence" value="ECO:0000318"/>
    <property type="project" value="GO_Central"/>
</dbReference>
<dbReference type="GO" id="GO:0001228">
    <property type="term" value="F:DNA-binding transcription activator activity, RNA polymerase II-specific"/>
    <property type="evidence" value="ECO:0000250"/>
    <property type="project" value="ARUK-UCL"/>
</dbReference>
<dbReference type="GO" id="GO:0000981">
    <property type="term" value="F:DNA-binding transcription factor activity, RNA polymerase II-specific"/>
    <property type="evidence" value="ECO:0000318"/>
    <property type="project" value="GO_Central"/>
</dbReference>
<dbReference type="GO" id="GO:0070840">
    <property type="term" value="F:dynein complex binding"/>
    <property type="evidence" value="ECO:0000353"/>
    <property type="project" value="UniProtKB"/>
</dbReference>
<dbReference type="GO" id="GO:0000976">
    <property type="term" value="F:transcription cis-regulatory region binding"/>
    <property type="evidence" value="ECO:0000318"/>
    <property type="project" value="GO_Central"/>
</dbReference>
<dbReference type="GO" id="GO:0008270">
    <property type="term" value="F:zinc ion binding"/>
    <property type="evidence" value="ECO:0007669"/>
    <property type="project" value="UniProtKB-KW"/>
</dbReference>
<dbReference type="GO" id="GO:0006974">
    <property type="term" value="P:DNA damage response"/>
    <property type="evidence" value="ECO:0007669"/>
    <property type="project" value="UniProtKB-KW"/>
</dbReference>
<dbReference type="GO" id="GO:0044458">
    <property type="term" value="P:motile cilium assembly"/>
    <property type="evidence" value="ECO:0007669"/>
    <property type="project" value="Ensembl"/>
</dbReference>
<dbReference type="GO" id="GO:0045893">
    <property type="term" value="P:positive regulation of DNA-templated transcription"/>
    <property type="evidence" value="ECO:0000314"/>
    <property type="project" value="UniProtKB"/>
</dbReference>
<dbReference type="GO" id="GO:0010628">
    <property type="term" value="P:positive regulation of gene expression"/>
    <property type="evidence" value="ECO:0007669"/>
    <property type="project" value="Ensembl"/>
</dbReference>
<dbReference type="GO" id="GO:1902857">
    <property type="term" value="P:positive regulation of non-motile cilium assembly"/>
    <property type="evidence" value="ECO:0007669"/>
    <property type="project" value="Ensembl"/>
</dbReference>
<dbReference type="GO" id="GO:0045944">
    <property type="term" value="P:positive regulation of transcription by RNA polymerase II"/>
    <property type="evidence" value="ECO:0000250"/>
    <property type="project" value="ARUK-UCL"/>
</dbReference>
<dbReference type="GO" id="GO:0006357">
    <property type="term" value="P:regulation of transcription by RNA polymerase II"/>
    <property type="evidence" value="ECO:0000318"/>
    <property type="project" value="GO_Central"/>
</dbReference>
<dbReference type="DisProt" id="DP01288"/>
<dbReference type="Gene3D" id="3.30.160.60">
    <property type="entry name" value="Classic Zinc Finger"/>
    <property type="match status" value="1"/>
</dbReference>
<dbReference type="InterPro" id="IPR055303">
    <property type="entry name" value="ATMIN"/>
</dbReference>
<dbReference type="InterPro" id="IPR056545">
    <property type="entry name" value="C2H2_ASCIZ_1st_2nd"/>
</dbReference>
<dbReference type="InterPro" id="IPR056380">
    <property type="entry name" value="Znf_C2H2_ASCIZ_4th"/>
</dbReference>
<dbReference type="InterPro" id="IPR013087">
    <property type="entry name" value="Znf_C2H2_type"/>
</dbReference>
<dbReference type="InterPro" id="IPR056381">
    <property type="entry name" value="Znf_C2HC_ASCIZ_3rd"/>
</dbReference>
<dbReference type="PANTHER" id="PTHR46664">
    <property type="entry name" value="ATM INTERACTOR"/>
    <property type="match status" value="1"/>
</dbReference>
<dbReference type="PANTHER" id="PTHR46664:SF2">
    <property type="entry name" value="ATM INTERACTOR"/>
    <property type="match status" value="1"/>
</dbReference>
<dbReference type="Pfam" id="PF24757">
    <property type="entry name" value="C2H2_ASCIZ"/>
    <property type="match status" value="2"/>
</dbReference>
<dbReference type="Pfam" id="PF24761">
    <property type="entry name" value="C2H2_ASCIZ_4th"/>
    <property type="match status" value="1"/>
</dbReference>
<dbReference type="Pfam" id="PF24759">
    <property type="entry name" value="C2HC_ASCIZ"/>
    <property type="match status" value="1"/>
</dbReference>
<dbReference type="SMART" id="SM00355">
    <property type="entry name" value="ZnF_C2H2"/>
    <property type="match status" value="4"/>
</dbReference>
<dbReference type="PROSITE" id="PS00028">
    <property type="entry name" value="ZINC_FINGER_C2H2_1"/>
    <property type="match status" value="1"/>
</dbReference>
<keyword id="KW-0010">Activator</keyword>
<keyword id="KW-0025">Alternative splicing</keyword>
<keyword id="KW-0227">DNA damage</keyword>
<keyword id="KW-0479">Metal-binding</keyword>
<keyword id="KW-0539">Nucleus</keyword>
<keyword id="KW-1267">Proteomics identification</keyword>
<keyword id="KW-1185">Reference proteome</keyword>
<keyword id="KW-0677">Repeat</keyword>
<keyword id="KW-0804">Transcription</keyword>
<keyword id="KW-0805">Transcription regulation</keyword>
<keyword id="KW-0862">Zinc</keyword>
<keyword id="KW-0863">Zinc-finger</keyword>
<proteinExistence type="evidence at protein level"/>
<accession>O43313</accession>
<accession>A8K4H8</accession>
<accession>Q68DC9</accession>
<protein>
    <recommendedName>
        <fullName>ATM interactor</fullName>
    </recommendedName>
    <alternativeName>
        <fullName>ATM/ATR-substrate CHK2-interacting zinc finger protein</fullName>
        <shortName>ASCIZ</shortName>
    </alternativeName>
    <alternativeName>
        <fullName>Zinc finger protein 822</fullName>
    </alternativeName>
</protein>
<sequence>MAASEAAAAAGSAALAAGARAVPAATTGAAAAASGPWVPPGPRLRGSRPRPAGATQQPAVPAPPAGELIQPSVSELSRAVRTNILCTVRGCGKILPNSPALNMHLVKSHRLQDGIVNPTIRKDLKTGPKFYCCPIEGCPRGPERPFSQFSLVKQHFMKMHAEKKHKCSKCSNSYGTEWDLKRHAEDCGKTFRCTCGCPYASRTALQSHIYRTGHEIPAEHRDPPSKKRKMENCAQNQKLSNKTIESLNNQPIPRPDTQELEASEIKLEPSFEDSCGSNTDKQTLTTPPRYPQKLLLPKPKVALVKLPVMQFSVMPVFVPTADSSAQPVVLGVDQGSATGAVHLMPLSVGTLILGLDSEACSLKESLPLFKIANPIAGEPISTGVQVNFGKSPSNPLQELGNTCQKNSISSINVQTDLSYASQNFIPSAQWATADSSVSSCSQTDLSFDSQVSLPISVHTQTFLPSSKVTSSIAAQTDAFMDTCFQSGGVSRETQTSGIESPTDDHVQMDQAGMCGDIFESVHSSYNVATGNIISNSLVAETVTHSLLPQNEPKTLNQDIEKSAPIINFSAQNSMLPSQNMTDNQTQTIDLLSDLENILSSNLPAQTLDHRSLLSDTNPGPDTQLPSGPAQNPGIDFDIEEFFSASNIQTQTEESELSTMTTEPVLESLDIETQTDFLLADTSAQSYGCRGNSNFLGLEMFDTQTQTDLNFFLDSSPHLPLGSILKHSSFSVSTDSSDTETQTEGVSTAKNIPALESKVQLNSTETQTMSSGFETLGSLFFTSNETQTAMDDFLLADLAWNTMESQFSSVETQTSAEPHTVSNF</sequence>
<gene>
    <name type="primary">ATMIN</name>
    <name type="synonym">KIAA0431</name>
    <name type="synonym">ZNF822</name>
</gene>
<organism>
    <name type="scientific">Homo sapiens</name>
    <name type="common">Human</name>
    <dbReference type="NCBI Taxonomy" id="9606"/>
    <lineage>
        <taxon>Eukaryota</taxon>
        <taxon>Metazoa</taxon>
        <taxon>Chordata</taxon>
        <taxon>Craniata</taxon>
        <taxon>Vertebrata</taxon>
        <taxon>Euteleostomi</taxon>
        <taxon>Mammalia</taxon>
        <taxon>Eutheria</taxon>
        <taxon>Euarchontoglires</taxon>
        <taxon>Primates</taxon>
        <taxon>Haplorrhini</taxon>
        <taxon>Catarrhini</taxon>
        <taxon>Hominidae</taxon>
        <taxon>Homo</taxon>
    </lineage>
</organism>
<feature type="chain" id="PRO_0000050756" description="ATM interactor">
    <location>
        <begin position="1"/>
        <end position="823"/>
    </location>
</feature>
<feature type="zinc finger region" description="C2H2-type 1">
    <location>
        <begin position="84"/>
        <end position="109"/>
    </location>
</feature>
<feature type="zinc finger region" description="C2H2-type 2; degenerate">
    <location>
        <begin position="165"/>
        <end position="184"/>
    </location>
</feature>
<feature type="region of interest" description="Disordered" evidence="1">
    <location>
        <begin position="28"/>
        <end position="67"/>
    </location>
</feature>
<feature type="region of interest" description="Disordered" evidence="1">
    <location>
        <begin position="214"/>
        <end position="234"/>
    </location>
</feature>
<feature type="region of interest" description="Required for formation of RAD51 foci">
    <location>
        <begin position="223"/>
        <end position="442"/>
    </location>
</feature>
<feature type="region of interest" description="Disordered" evidence="1">
    <location>
        <begin position="268"/>
        <end position="289"/>
    </location>
</feature>
<feature type="region of interest" description="Disordered" evidence="1">
    <location>
        <begin position="610"/>
        <end position="634"/>
    </location>
</feature>
<feature type="compositionally biased region" description="Low complexity" evidence="1">
    <location>
        <begin position="49"/>
        <end position="59"/>
    </location>
</feature>
<feature type="compositionally biased region" description="Basic and acidic residues" evidence="1">
    <location>
        <begin position="214"/>
        <end position="225"/>
    </location>
</feature>
<feature type="compositionally biased region" description="Polar residues" evidence="1">
    <location>
        <begin position="275"/>
        <end position="286"/>
    </location>
</feature>
<feature type="compositionally biased region" description="Polar residues" evidence="1">
    <location>
        <begin position="613"/>
        <end position="629"/>
    </location>
</feature>
<feature type="splice variant" id="VSP_035820" description="In isoform 2." evidence="5 6">
    <location>
        <begin position="1"/>
        <end position="156"/>
    </location>
</feature>
<feature type="sequence variant" id="VAR_050681" description="In dbSNP:rs2278022.">
    <original>S</original>
    <variation>P</variation>
    <location>
        <position position="240"/>
    </location>
</feature>
<feature type="sequence variant" id="VAR_050682" description="In dbSNP:rs2278023.">
    <original>K</original>
    <variation>E</variation>
    <location>
        <position position="305"/>
    </location>
</feature>
<feature type="sequence conflict" description="In Ref. 2; CAH18291." evidence="7" ref="2">
    <original>Y</original>
    <variation>C</variation>
    <location>
        <position position="174"/>
    </location>
</feature>
<feature type="sequence conflict" description="In Ref. 5; BAF83632." evidence="7" ref="5">
    <original>M</original>
    <variation>V</variation>
    <location>
        <position position="309"/>
    </location>
</feature>
<feature type="sequence conflict" description="In Ref. 2; CAH18291." evidence="7" ref="2">
    <original>T</original>
    <variation>A</variation>
    <location>
        <position position="338"/>
    </location>
</feature>
<feature type="sequence conflict" description="In Ref. 2; CAH18291." evidence="7" ref="2">
    <original>A</original>
    <variation>T</variation>
    <location>
        <position position="433"/>
    </location>
</feature>
<feature type="sequence conflict" description="In Ref. 2; CAH18291." evidence="7" ref="2">
    <original>A</original>
    <variation>P</variation>
    <location>
        <position position="474"/>
    </location>
</feature>
<feature type="sequence conflict" description="In Ref. 2; CAH18291." evidence="7" ref="2">
    <original>Y</original>
    <variation>H</variation>
    <location>
        <position position="525"/>
    </location>
</feature>
<feature type="sequence conflict" description="In Ref. 5; BAF83632." evidence="7" ref="5">
    <original>Q</original>
    <variation>R</variation>
    <location>
        <position position="703"/>
    </location>
</feature>
<feature type="sequence conflict" description="In Ref. 2; CAH18291." evidence="7" ref="2">
    <original>S</original>
    <variation>P</variation>
    <location>
        <position position="814"/>
    </location>
</feature>